<evidence type="ECO:0000255" key="1">
    <source>
        <dbReference type="HAMAP-Rule" id="MF_00379"/>
    </source>
</evidence>
<sequence>MNLDDTIVAIATPPGRGGIGVVRLAGPEARTVALLMLRLANGKAELEAQRAHFAELVDPESGERLDEVVVAYFAKPHSYTTDDIVEISCHGSPVLLARVVELALAKGVRMADPGEFTMRAFLNGRIDLTQAEAVRDLIESQTLYQARVAAQQLGGSVSRRLQPTKQKLVNLIAVLEAGIDFADDDVSVLPAKEAIARIAEVHEPLAKLKEGFAFGKVVHEGLTLAIVGRPNVGKSSLFNRLVERDRAIVTAIPGTTRDLVTETVSLGGIPVHLVDTAGIRESHDEAESIGIQKSREAMADADLVLVVVDAHAETGHELDHQLISAAAERSAILVENKIDLGRHSVANGKSIPVVRTSAVSGEGIAELREQILRMVSGESGREESGFLTNIRQHQLVTDSLAALEAATNALEVRVPHEMVLMDLYNALRPLDDITGATTADDILNLIFSTFCIGK</sequence>
<feature type="chain" id="PRO_0000345694" description="tRNA modification GTPase MnmE">
    <location>
        <begin position="1"/>
        <end position="454"/>
    </location>
</feature>
<feature type="domain" description="TrmE-type G">
    <location>
        <begin position="221"/>
        <end position="376"/>
    </location>
</feature>
<feature type="binding site" evidence="1">
    <location>
        <position position="23"/>
    </location>
    <ligand>
        <name>(6S)-5-formyl-5,6,7,8-tetrahydrofolate</name>
        <dbReference type="ChEBI" id="CHEBI:57457"/>
    </ligand>
</feature>
<feature type="binding site" evidence="1">
    <location>
        <position position="86"/>
    </location>
    <ligand>
        <name>(6S)-5-formyl-5,6,7,8-tetrahydrofolate</name>
        <dbReference type="ChEBI" id="CHEBI:57457"/>
    </ligand>
</feature>
<feature type="binding site" evidence="1">
    <location>
        <position position="125"/>
    </location>
    <ligand>
        <name>(6S)-5-formyl-5,6,7,8-tetrahydrofolate</name>
        <dbReference type="ChEBI" id="CHEBI:57457"/>
    </ligand>
</feature>
<feature type="binding site" evidence="1">
    <location>
        <begin position="231"/>
        <end position="236"/>
    </location>
    <ligand>
        <name>GTP</name>
        <dbReference type="ChEBI" id="CHEBI:37565"/>
    </ligand>
</feature>
<feature type="binding site" evidence="1">
    <location>
        <position position="231"/>
    </location>
    <ligand>
        <name>K(+)</name>
        <dbReference type="ChEBI" id="CHEBI:29103"/>
    </ligand>
</feature>
<feature type="binding site" evidence="1">
    <location>
        <position position="235"/>
    </location>
    <ligand>
        <name>Mg(2+)</name>
        <dbReference type="ChEBI" id="CHEBI:18420"/>
    </ligand>
</feature>
<feature type="binding site" evidence="1">
    <location>
        <begin position="250"/>
        <end position="256"/>
    </location>
    <ligand>
        <name>GTP</name>
        <dbReference type="ChEBI" id="CHEBI:37565"/>
    </ligand>
</feature>
<feature type="binding site" evidence="1">
    <location>
        <position position="250"/>
    </location>
    <ligand>
        <name>K(+)</name>
        <dbReference type="ChEBI" id="CHEBI:29103"/>
    </ligand>
</feature>
<feature type="binding site" evidence="1">
    <location>
        <position position="252"/>
    </location>
    <ligand>
        <name>K(+)</name>
        <dbReference type="ChEBI" id="CHEBI:29103"/>
    </ligand>
</feature>
<feature type="binding site" evidence="1">
    <location>
        <position position="255"/>
    </location>
    <ligand>
        <name>K(+)</name>
        <dbReference type="ChEBI" id="CHEBI:29103"/>
    </ligand>
</feature>
<feature type="binding site" evidence="1">
    <location>
        <position position="256"/>
    </location>
    <ligand>
        <name>Mg(2+)</name>
        <dbReference type="ChEBI" id="CHEBI:18420"/>
    </ligand>
</feature>
<feature type="binding site" evidence="1">
    <location>
        <begin position="275"/>
        <end position="278"/>
    </location>
    <ligand>
        <name>GTP</name>
        <dbReference type="ChEBI" id="CHEBI:37565"/>
    </ligand>
</feature>
<feature type="binding site" evidence="1">
    <location>
        <position position="454"/>
    </location>
    <ligand>
        <name>(6S)-5-formyl-5,6,7,8-tetrahydrofolate</name>
        <dbReference type="ChEBI" id="CHEBI:57457"/>
    </ligand>
</feature>
<reference key="1">
    <citation type="journal article" date="2009" name="Appl. Environ. Microbiol.">
        <title>Three genomes from the phylum Acidobacteria provide insight into the lifestyles of these microorganisms in soils.</title>
        <authorList>
            <person name="Ward N.L."/>
            <person name="Challacombe J.F."/>
            <person name="Janssen P.H."/>
            <person name="Henrissat B."/>
            <person name="Coutinho P.M."/>
            <person name="Wu M."/>
            <person name="Xie G."/>
            <person name="Haft D.H."/>
            <person name="Sait M."/>
            <person name="Badger J."/>
            <person name="Barabote R.D."/>
            <person name="Bradley B."/>
            <person name="Brettin T.S."/>
            <person name="Brinkac L.M."/>
            <person name="Bruce D."/>
            <person name="Creasy T."/>
            <person name="Daugherty S.C."/>
            <person name="Davidsen T.M."/>
            <person name="DeBoy R.T."/>
            <person name="Detter J.C."/>
            <person name="Dodson R.J."/>
            <person name="Durkin A.S."/>
            <person name="Ganapathy A."/>
            <person name="Gwinn-Giglio M."/>
            <person name="Han C.S."/>
            <person name="Khouri H."/>
            <person name="Kiss H."/>
            <person name="Kothari S.P."/>
            <person name="Madupu R."/>
            <person name="Nelson K.E."/>
            <person name="Nelson W.C."/>
            <person name="Paulsen I."/>
            <person name="Penn K."/>
            <person name="Ren Q."/>
            <person name="Rosovitz M.J."/>
            <person name="Selengut J.D."/>
            <person name="Shrivastava S."/>
            <person name="Sullivan S.A."/>
            <person name="Tapia R."/>
            <person name="Thompson L.S."/>
            <person name="Watkins K.L."/>
            <person name="Yang Q."/>
            <person name="Yu C."/>
            <person name="Zafar N."/>
            <person name="Zhou L."/>
            <person name="Kuske C.R."/>
        </authorList>
    </citation>
    <scope>NUCLEOTIDE SEQUENCE [LARGE SCALE GENOMIC DNA]</scope>
    <source>
        <strain>Ellin345</strain>
    </source>
</reference>
<gene>
    <name evidence="1" type="primary">mnmE</name>
    <name evidence="1" type="synonym">trmE</name>
    <name type="ordered locus">Acid345_4729</name>
</gene>
<comment type="function">
    <text evidence="1">Exhibits a very high intrinsic GTPase hydrolysis rate. Involved in the addition of a carboxymethylaminomethyl (cmnm) group at the wobble position (U34) of certain tRNAs, forming tRNA-cmnm(5)s(2)U34.</text>
</comment>
<comment type="cofactor">
    <cofactor evidence="1">
        <name>K(+)</name>
        <dbReference type="ChEBI" id="CHEBI:29103"/>
    </cofactor>
    <text evidence="1">Binds 1 potassium ion per subunit.</text>
</comment>
<comment type="subunit">
    <text evidence="1">Homodimer. Heterotetramer of two MnmE and two MnmG subunits.</text>
</comment>
<comment type="subcellular location">
    <subcellularLocation>
        <location evidence="1">Cytoplasm</location>
    </subcellularLocation>
</comment>
<comment type="similarity">
    <text evidence="1">Belongs to the TRAFAC class TrmE-Era-EngA-EngB-Septin-like GTPase superfamily. TrmE GTPase family.</text>
</comment>
<name>MNME_KORVE</name>
<dbReference type="EC" id="3.6.-.-" evidence="1"/>
<dbReference type="EMBL" id="CP000360">
    <property type="protein sequence ID" value="ABF43728.1"/>
    <property type="molecule type" value="Genomic_DNA"/>
</dbReference>
<dbReference type="RefSeq" id="WP_011525524.1">
    <property type="nucleotide sequence ID" value="NC_008009.1"/>
</dbReference>
<dbReference type="SMR" id="Q1IHC2"/>
<dbReference type="STRING" id="204669.Acid345_4729"/>
<dbReference type="EnsemblBacteria" id="ABF43728">
    <property type="protein sequence ID" value="ABF43728"/>
    <property type="gene ID" value="Acid345_4729"/>
</dbReference>
<dbReference type="KEGG" id="aba:Acid345_4729"/>
<dbReference type="eggNOG" id="COG0486">
    <property type="taxonomic scope" value="Bacteria"/>
</dbReference>
<dbReference type="HOGENOM" id="CLU_019624_4_1_0"/>
<dbReference type="OrthoDB" id="9805918at2"/>
<dbReference type="Proteomes" id="UP000002432">
    <property type="component" value="Chromosome"/>
</dbReference>
<dbReference type="GO" id="GO:0005829">
    <property type="term" value="C:cytosol"/>
    <property type="evidence" value="ECO:0007669"/>
    <property type="project" value="TreeGrafter"/>
</dbReference>
<dbReference type="GO" id="GO:0005525">
    <property type="term" value="F:GTP binding"/>
    <property type="evidence" value="ECO:0007669"/>
    <property type="project" value="UniProtKB-UniRule"/>
</dbReference>
<dbReference type="GO" id="GO:0003924">
    <property type="term" value="F:GTPase activity"/>
    <property type="evidence" value="ECO:0007669"/>
    <property type="project" value="UniProtKB-UniRule"/>
</dbReference>
<dbReference type="GO" id="GO:0046872">
    <property type="term" value="F:metal ion binding"/>
    <property type="evidence" value="ECO:0007669"/>
    <property type="project" value="UniProtKB-KW"/>
</dbReference>
<dbReference type="GO" id="GO:0030488">
    <property type="term" value="P:tRNA methylation"/>
    <property type="evidence" value="ECO:0007669"/>
    <property type="project" value="TreeGrafter"/>
</dbReference>
<dbReference type="GO" id="GO:0002098">
    <property type="term" value="P:tRNA wobble uridine modification"/>
    <property type="evidence" value="ECO:0007669"/>
    <property type="project" value="TreeGrafter"/>
</dbReference>
<dbReference type="CDD" id="cd04164">
    <property type="entry name" value="trmE"/>
    <property type="match status" value="1"/>
</dbReference>
<dbReference type="CDD" id="cd14858">
    <property type="entry name" value="TrmE_N"/>
    <property type="match status" value="1"/>
</dbReference>
<dbReference type="FunFam" id="3.40.50.300:FF:001376">
    <property type="entry name" value="tRNA modification GTPase MnmE"/>
    <property type="match status" value="1"/>
</dbReference>
<dbReference type="Gene3D" id="3.40.50.300">
    <property type="entry name" value="P-loop containing nucleotide triphosphate hydrolases"/>
    <property type="match status" value="1"/>
</dbReference>
<dbReference type="Gene3D" id="3.30.1360.120">
    <property type="entry name" value="Probable tRNA modification gtpase trme, domain 1"/>
    <property type="match status" value="1"/>
</dbReference>
<dbReference type="Gene3D" id="1.20.120.430">
    <property type="entry name" value="tRNA modification GTPase MnmE domain 2"/>
    <property type="match status" value="1"/>
</dbReference>
<dbReference type="HAMAP" id="MF_00379">
    <property type="entry name" value="GTPase_MnmE"/>
    <property type="match status" value="1"/>
</dbReference>
<dbReference type="InterPro" id="IPR031168">
    <property type="entry name" value="G_TrmE"/>
</dbReference>
<dbReference type="InterPro" id="IPR006073">
    <property type="entry name" value="GTP-bd"/>
</dbReference>
<dbReference type="InterPro" id="IPR018948">
    <property type="entry name" value="GTP-bd_TrmE_N"/>
</dbReference>
<dbReference type="InterPro" id="IPR004520">
    <property type="entry name" value="GTPase_MnmE"/>
</dbReference>
<dbReference type="InterPro" id="IPR027368">
    <property type="entry name" value="MnmE_dom2"/>
</dbReference>
<dbReference type="InterPro" id="IPR025867">
    <property type="entry name" value="MnmE_helical"/>
</dbReference>
<dbReference type="InterPro" id="IPR027417">
    <property type="entry name" value="P-loop_NTPase"/>
</dbReference>
<dbReference type="InterPro" id="IPR005225">
    <property type="entry name" value="Small_GTP-bd"/>
</dbReference>
<dbReference type="InterPro" id="IPR027266">
    <property type="entry name" value="TrmE/GcvT_dom1"/>
</dbReference>
<dbReference type="NCBIfam" id="TIGR00450">
    <property type="entry name" value="mnmE_trmE_thdF"/>
    <property type="match status" value="1"/>
</dbReference>
<dbReference type="NCBIfam" id="NF003661">
    <property type="entry name" value="PRK05291.1-3"/>
    <property type="match status" value="1"/>
</dbReference>
<dbReference type="NCBIfam" id="TIGR00231">
    <property type="entry name" value="small_GTP"/>
    <property type="match status" value="1"/>
</dbReference>
<dbReference type="PANTHER" id="PTHR42714">
    <property type="entry name" value="TRNA MODIFICATION GTPASE GTPBP3"/>
    <property type="match status" value="1"/>
</dbReference>
<dbReference type="PANTHER" id="PTHR42714:SF2">
    <property type="entry name" value="TRNA MODIFICATION GTPASE GTPBP3, MITOCHONDRIAL"/>
    <property type="match status" value="1"/>
</dbReference>
<dbReference type="Pfam" id="PF01926">
    <property type="entry name" value="MMR_HSR1"/>
    <property type="match status" value="1"/>
</dbReference>
<dbReference type="Pfam" id="PF12631">
    <property type="entry name" value="MnmE_helical"/>
    <property type="match status" value="1"/>
</dbReference>
<dbReference type="Pfam" id="PF10396">
    <property type="entry name" value="TrmE_N"/>
    <property type="match status" value="1"/>
</dbReference>
<dbReference type="PRINTS" id="PR00326">
    <property type="entry name" value="GTP1OBG"/>
</dbReference>
<dbReference type="SUPFAM" id="SSF52540">
    <property type="entry name" value="P-loop containing nucleoside triphosphate hydrolases"/>
    <property type="match status" value="1"/>
</dbReference>
<dbReference type="PROSITE" id="PS51709">
    <property type="entry name" value="G_TRME"/>
    <property type="match status" value="1"/>
</dbReference>
<accession>Q1IHC2</accession>
<organism>
    <name type="scientific">Koribacter versatilis (strain Ellin345)</name>
    <dbReference type="NCBI Taxonomy" id="204669"/>
    <lineage>
        <taxon>Bacteria</taxon>
        <taxon>Pseudomonadati</taxon>
        <taxon>Acidobacteriota</taxon>
        <taxon>Terriglobia</taxon>
        <taxon>Terriglobales</taxon>
        <taxon>Candidatus Korobacteraceae</taxon>
        <taxon>Candidatus Korobacter</taxon>
    </lineage>
</organism>
<protein>
    <recommendedName>
        <fullName evidence="1">tRNA modification GTPase MnmE</fullName>
        <ecNumber evidence="1">3.6.-.-</ecNumber>
    </recommendedName>
</protein>
<keyword id="KW-0963">Cytoplasm</keyword>
<keyword id="KW-0342">GTP-binding</keyword>
<keyword id="KW-0378">Hydrolase</keyword>
<keyword id="KW-0460">Magnesium</keyword>
<keyword id="KW-0479">Metal-binding</keyword>
<keyword id="KW-0547">Nucleotide-binding</keyword>
<keyword id="KW-0630">Potassium</keyword>
<keyword id="KW-1185">Reference proteome</keyword>
<keyword id="KW-0819">tRNA processing</keyword>
<proteinExistence type="inferred from homology"/>